<sequence length="66" mass="7595">MKEKIHPNYQEVEVKCVCGNTFKTGSTKKEIKVEICSNCHPFYTGAQRQIEVGGRAEKFRKKYGLK</sequence>
<comment type="function">
    <text evidence="1">Binds the 23S rRNA.</text>
</comment>
<comment type="cofactor">
    <cofactor evidence="1">
        <name>Zn(2+)</name>
        <dbReference type="ChEBI" id="CHEBI:29105"/>
    </cofactor>
    <text evidence="1">Binds 1 zinc ion per subunit.</text>
</comment>
<comment type="subunit">
    <text evidence="1">Part of the 50S ribosomal subunit.</text>
</comment>
<comment type="similarity">
    <text evidence="1">Belongs to the bacterial ribosomal protein bL31 family. Type A subfamily.</text>
</comment>
<organism>
    <name type="scientific">Desulforamulus reducens (strain ATCC BAA-1160 / DSM 100696 / MI-1)</name>
    <name type="common">Desulfotomaculum reducens</name>
    <dbReference type="NCBI Taxonomy" id="349161"/>
    <lineage>
        <taxon>Bacteria</taxon>
        <taxon>Bacillati</taxon>
        <taxon>Bacillota</taxon>
        <taxon>Clostridia</taxon>
        <taxon>Eubacteriales</taxon>
        <taxon>Peptococcaceae</taxon>
        <taxon>Desulforamulus</taxon>
    </lineage>
</organism>
<protein>
    <recommendedName>
        <fullName evidence="1">Large ribosomal subunit protein bL31</fullName>
    </recommendedName>
    <alternativeName>
        <fullName evidence="2">50S ribosomal protein L31</fullName>
    </alternativeName>
</protein>
<feature type="chain" id="PRO_1000126606" description="Large ribosomal subunit protein bL31">
    <location>
        <begin position="1"/>
        <end position="66"/>
    </location>
</feature>
<feature type="binding site" evidence="1">
    <location>
        <position position="16"/>
    </location>
    <ligand>
        <name>Zn(2+)</name>
        <dbReference type="ChEBI" id="CHEBI:29105"/>
    </ligand>
</feature>
<feature type="binding site" evidence="1">
    <location>
        <position position="18"/>
    </location>
    <ligand>
        <name>Zn(2+)</name>
        <dbReference type="ChEBI" id="CHEBI:29105"/>
    </ligand>
</feature>
<feature type="binding site" evidence="1">
    <location>
        <position position="36"/>
    </location>
    <ligand>
        <name>Zn(2+)</name>
        <dbReference type="ChEBI" id="CHEBI:29105"/>
    </ligand>
</feature>
<feature type="binding site" evidence="1">
    <location>
        <position position="39"/>
    </location>
    <ligand>
        <name>Zn(2+)</name>
        <dbReference type="ChEBI" id="CHEBI:29105"/>
    </ligand>
</feature>
<name>RL31_DESRM</name>
<gene>
    <name evidence="1" type="primary">rpmE</name>
    <name type="ordered locus">Dred_3172</name>
</gene>
<accession>A4J9C1</accession>
<reference key="1">
    <citation type="submission" date="2007-03" db="EMBL/GenBank/DDBJ databases">
        <title>Complete sequence of Desulfotomaculum reducens MI-1.</title>
        <authorList>
            <consortium name="US DOE Joint Genome Institute"/>
            <person name="Copeland A."/>
            <person name="Lucas S."/>
            <person name="Lapidus A."/>
            <person name="Barry K."/>
            <person name="Detter J.C."/>
            <person name="Glavina del Rio T."/>
            <person name="Hammon N."/>
            <person name="Israni S."/>
            <person name="Dalin E."/>
            <person name="Tice H."/>
            <person name="Pitluck S."/>
            <person name="Sims D."/>
            <person name="Brettin T."/>
            <person name="Bruce D."/>
            <person name="Han C."/>
            <person name="Tapia R."/>
            <person name="Schmutz J."/>
            <person name="Larimer F."/>
            <person name="Land M."/>
            <person name="Hauser L."/>
            <person name="Kyrpides N."/>
            <person name="Kim E."/>
            <person name="Tebo B.M."/>
            <person name="Richardson P."/>
        </authorList>
    </citation>
    <scope>NUCLEOTIDE SEQUENCE [LARGE SCALE GENOMIC DNA]</scope>
    <source>
        <strain>ATCC BAA-1160 / DSM 100696 / MI-1</strain>
    </source>
</reference>
<proteinExistence type="inferred from homology"/>
<evidence type="ECO:0000255" key="1">
    <source>
        <dbReference type="HAMAP-Rule" id="MF_00501"/>
    </source>
</evidence>
<evidence type="ECO:0000305" key="2"/>
<keyword id="KW-0479">Metal-binding</keyword>
<keyword id="KW-1185">Reference proteome</keyword>
<keyword id="KW-0687">Ribonucleoprotein</keyword>
<keyword id="KW-0689">Ribosomal protein</keyword>
<keyword id="KW-0694">RNA-binding</keyword>
<keyword id="KW-0699">rRNA-binding</keyword>
<keyword id="KW-0862">Zinc</keyword>
<dbReference type="EMBL" id="CP000612">
    <property type="protein sequence ID" value="ABO51674.1"/>
    <property type="molecule type" value="Genomic_DNA"/>
</dbReference>
<dbReference type="RefSeq" id="WP_011879462.1">
    <property type="nucleotide sequence ID" value="NC_009253.1"/>
</dbReference>
<dbReference type="SMR" id="A4J9C1"/>
<dbReference type="STRING" id="349161.Dred_3172"/>
<dbReference type="KEGG" id="drm:Dred_3172"/>
<dbReference type="eggNOG" id="COG0254">
    <property type="taxonomic scope" value="Bacteria"/>
</dbReference>
<dbReference type="HOGENOM" id="CLU_114306_4_3_9"/>
<dbReference type="OrthoDB" id="9803251at2"/>
<dbReference type="Proteomes" id="UP000001556">
    <property type="component" value="Chromosome"/>
</dbReference>
<dbReference type="GO" id="GO:1990904">
    <property type="term" value="C:ribonucleoprotein complex"/>
    <property type="evidence" value="ECO:0007669"/>
    <property type="project" value="UniProtKB-KW"/>
</dbReference>
<dbReference type="GO" id="GO:0005840">
    <property type="term" value="C:ribosome"/>
    <property type="evidence" value="ECO:0007669"/>
    <property type="project" value="UniProtKB-KW"/>
</dbReference>
<dbReference type="GO" id="GO:0046872">
    <property type="term" value="F:metal ion binding"/>
    <property type="evidence" value="ECO:0007669"/>
    <property type="project" value="UniProtKB-KW"/>
</dbReference>
<dbReference type="GO" id="GO:0019843">
    <property type="term" value="F:rRNA binding"/>
    <property type="evidence" value="ECO:0007669"/>
    <property type="project" value="UniProtKB-KW"/>
</dbReference>
<dbReference type="GO" id="GO:0003735">
    <property type="term" value="F:structural constituent of ribosome"/>
    <property type="evidence" value="ECO:0007669"/>
    <property type="project" value="InterPro"/>
</dbReference>
<dbReference type="GO" id="GO:0006412">
    <property type="term" value="P:translation"/>
    <property type="evidence" value="ECO:0007669"/>
    <property type="project" value="UniProtKB-UniRule"/>
</dbReference>
<dbReference type="Gene3D" id="4.10.830.30">
    <property type="entry name" value="Ribosomal protein L31"/>
    <property type="match status" value="1"/>
</dbReference>
<dbReference type="HAMAP" id="MF_00501">
    <property type="entry name" value="Ribosomal_bL31_1"/>
    <property type="match status" value="1"/>
</dbReference>
<dbReference type="InterPro" id="IPR034704">
    <property type="entry name" value="Ribosomal_bL28/bL31-like_sf"/>
</dbReference>
<dbReference type="InterPro" id="IPR002150">
    <property type="entry name" value="Ribosomal_bL31"/>
</dbReference>
<dbReference type="InterPro" id="IPR027491">
    <property type="entry name" value="Ribosomal_bL31_A"/>
</dbReference>
<dbReference type="InterPro" id="IPR042105">
    <property type="entry name" value="Ribosomal_bL31_sf"/>
</dbReference>
<dbReference type="NCBIfam" id="TIGR00105">
    <property type="entry name" value="L31"/>
    <property type="match status" value="1"/>
</dbReference>
<dbReference type="NCBIfam" id="NF000612">
    <property type="entry name" value="PRK00019.1"/>
    <property type="match status" value="1"/>
</dbReference>
<dbReference type="PANTHER" id="PTHR33280">
    <property type="entry name" value="50S RIBOSOMAL PROTEIN L31, CHLOROPLASTIC"/>
    <property type="match status" value="1"/>
</dbReference>
<dbReference type="PANTHER" id="PTHR33280:SF1">
    <property type="entry name" value="LARGE RIBOSOMAL SUBUNIT PROTEIN BL31C"/>
    <property type="match status" value="1"/>
</dbReference>
<dbReference type="Pfam" id="PF01197">
    <property type="entry name" value="Ribosomal_L31"/>
    <property type="match status" value="1"/>
</dbReference>
<dbReference type="PRINTS" id="PR01249">
    <property type="entry name" value="RIBOSOMALL31"/>
</dbReference>
<dbReference type="SUPFAM" id="SSF143800">
    <property type="entry name" value="L28p-like"/>
    <property type="match status" value="1"/>
</dbReference>
<dbReference type="PROSITE" id="PS01143">
    <property type="entry name" value="RIBOSOMAL_L31"/>
    <property type="match status" value="1"/>
</dbReference>